<accession>P43159</accession>
<protein>
    <recommendedName>
        <fullName>Cathepsin E</fullName>
        <ecNumber>3.4.23.34</ecNumber>
    </recommendedName>
</protein>
<organism>
    <name type="scientific">Oryctolagus cuniculus</name>
    <name type="common">Rabbit</name>
    <dbReference type="NCBI Taxonomy" id="9986"/>
    <lineage>
        <taxon>Eukaryota</taxon>
        <taxon>Metazoa</taxon>
        <taxon>Chordata</taxon>
        <taxon>Craniata</taxon>
        <taxon>Vertebrata</taxon>
        <taxon>Euteleostomi</taxon>
        <taxon>Mammalia</taxon>
        <taxon>Eutheria</taxon>
        <taxon>Euarchontoglires</taxon>
        <taxon>Glires</taxon>
        <taxon>Lagomorpha</taxon>
        <taxon>Leporidae</taxon>
        <taxon>Oryctolagus</taxon>
    </lineage>
</organism>
<comment type="function">
    <text evidence="1">May have a role in immune function. Probably involved in the processing of antigenic peptides during MHC class II-mediated antigen presentation. May play a role in activation-induced lymphocyte depletion in the thymus, and in neuronal degeneration and glial cell activation in the brain (By similarity).</text>
</comment>
<comment type="catalytic activity">
    <reaction>
        <text>Similar to cathepsin D, but slightly broader specificity.</text>
        <dbReference type="EC" id="3.4.23.34"/>
    </reaction>
</comment>
<comment type="subunit">
    <text evidence="1">Homodimer; disulfide-linked.</text>
</comment>
<comment type="subcellular location">
    <subcellularLocation>
        <location evidence="1">Endosome</location>
    </subcellularLocation>
    <text evidence="1">The proenzyme is localized to the endoplasmic reticulum and Golgi apparatus, while the mature enzyme is localized to the endosome.</text>
</comment>
<comment type="PTM">
    <text evidence="1">Glycosylated. The nature of the carbohydrate chain varies between cell types (By similarity).</text>
</comment>
<comment type="similarity">
    <text evidence="5">Belongs to the peptidase A1 family.</text>
</comment>
<dbReference type="EC" id="3.4.23.34"/>
<dbReference type="EMBL" id="L08418">
    <property type="protein sequence ID" value="AAC37308.1"/>
    <property type="molecule type" value="mRNA"/>
</dbReference>
<dbReference type="PIR" id="S36865">
    <property type="entry name" value="S36865"/>
</dbReference>
<dbReference type="RefSeq" id="NP_001075713.1">
    <property type="nucleotide sequence ID" value="NM_001082244.1"/>
</dbReference>
<dbReference type="SMR" id="P43159"/>
<dbReference type="FunCoup" id="P43159">
    <property type="interactions" value="228"/>
</dbReference>
<dbReference type="STRING" id="9986.ENSOCUP00000001598"/>
<dbReference type="MEROPS" id="A01.010"/>
<dbReference type="GlyCosmos" id="P43159">
    <property type="glycosylation" value="1 site, No reported glycans"/>
</dbReference>
<dbReference type="PaxDb" id="9986-ENSOCUP00000001598"/>
<dbReference type="GeneID" id="100009063"/>
<dbReference type="KEGG" id="ocu:100009063"/>
<dbReference type="CTD" id="1510"/>
<dbReference type="eggNOG" id="KOG1339">
    <property type="taxonomic scope" value="Eukaryota"/>
</dbReference>
<dbReference type="InParanoid" id="P43159"/>
<dbReference type="OrthoDB" id="771136at2759"/>
<dbReference type="Proteomes" id="UP000001811">
    <property type="component" value="Unplaced"/>
</dbReference>
<dbReference type="GO" id="GO:0005768">
    <property type="term" value="C:endosome"/>
    <property type="evidence" value="ECO:0000250"/>
    <property type="project" value="UniProtKB"/>
</dbReference>
<dbReference type="GO" id="GO:0004190">
    <property type="term" value="F:aspartic-type endopeptidase activity"/>
    <property type="evidence" value="ECO:0000250"/>
    <property type="project" value="UniProtKB"/>
</dbReference>
<dbReference type="GO" id="GO:0019886">
    <property type="term" value="P:antigen processing and presentation of exogenous peptide antigen via MHC class II"/>
    <property type="evidence" value="ECO:0000250"/>
    <property type="project" value="UniProtKB"/>
</dbReference>
<dbReference type="GO" id="GO:0006508">
    <property type="term" value="P:proteolysis"/>
    <property type="evidence" value="ECO:0007669"/>
    <property type="project" value="UniProtKB-KW"/>
</dbReference>
<dbReference type="FunFam" id="2.40.70.10:FF:000006">
    <property type="entry name" value="Cathepsin E"/>
    <property type="match status" value="1"/>
</dbReference>
<dbReference type="FunFam" id="2.40.70.10:FF:000004">
    <property type="entry name" value="Pepsin A"/>
    <property type="match status" value="1"/>
</dbReference>
<dbReference type="Gene3D" id="6.10.140.60">
    <property type="match status" value="1"/>
</dbReference>
<dbReference type="Gene3D" id="2.40.70.10">
    <property type="entry name" value="Acid Proteases"/>
    <property type="match status" value="2"/>
</dbReference>
<dbReference type="InterPro" id="IPR001461">
    <property type="entry name" value="Aspartic_peptidase_A1"/>
</dbReference>
<dbReference type="InterPro" id="IPR001969">
    <property type="entry name" value="Aspartic_peptidase_AS"/>
</dbReference>
<dbReference type="InterPro" id="IPR012848">
    <property type="entry name" value="Aspartic_peptidase_N"/>
</dbReference>
<dbReference type="InterPro" id="IPR033121">
    <property type="entry name" value="PEPTIDASE_A1"/>
</dbReference>
<dbReference type="InterPro" id="IPR021109">
    <property type="entry name" value="Peptidase_aspartic_dom_sf"/>
</dbReference>
<dbReference type="PANTHER" id="PTHR47966">
    <property type="entry name" value="BETA-SITE APP-CLEAVING ENZYME, ISOFORM A-RELATED"/>
    <property type="match status" value="1"/>
</dbReference>
<dbReference type="PANTHER" id="PTHR47966:SF26">
    <property type="entry name" value="CATHEPSIN E"/>
    <property type="match status" value="1"/>
</dbReference>
<dbReference type="Pfam" id="PF07966">
    <property type="entry name" value="A1_Propeptide"/>
    <property type="match status" value="1"/>
</dbReference>
<dbReference type="Pfam" id="PF00026">
    <property type="entry name" value="Asp"/>
    <property type="match status" value="1"/>
</dbReference>
<dbReference type="PRINTS" id="PR00792">
    <property type="entry name" value="PEPSIN"/>
</dbReference>
<dbReference type="SUPFAM" id="SSF50630">
    <property type="entry name" value="Acid proteases"/>
    <property type="match status" value="1"/>
</dbReference>
<dbReference type="PROSITE" id="PS00141">
    <property type="entry name" value="ASP_PROTEASE"/>
    <property type="match status" value="1"/>
</dbReference>
<dbReference type="PROSITE" id="PS51767">
    <property type="entry name" value="PEPTIDASE_A1"/>
    <property type="match status" value="1"/>
</dbReference>
<proteinExistence type="evidence at transcript level"/>
<feature type="signal peptide" evidence="2">
    <location>
        <begin position="1"/>
        <end position="19"/>
    </location>
</feature>
<feature type="propeptide" id="PRO_0000025978" description="Activation peptide" evidence="1">
    <location>
        <begin position="20"/>
        <end position="53"/>
    </location>
</feature>
<feature type="chain" id="PRO_0000025979" description="Cathepsin E">
    <location>
        <begin position="54"/>
        <end position="396"/>
    </location>
</feature>
<feature type="domain" description="Peptidase A1" evidence="3">
    <location>
        <begin position="78"/>
        <end position="392"/>
    </location>
</feature>
<feature type="active site" evidence="4">
    <location>
        <position position="96"/>
    </location>
</feature>
<feature type="active site" evidence="4">
    <location>
        <position position="281"/>
    </location>
</feature>
<feature type="glycosylation site" description="N-linked (GlcNAc...) asparagine" evidence="2">
    <location>
        <position position="90"/>
    </location>
</feature>
<feature type="disulfide bond" description="Interchain" evidence="5">
    <location>
        <position position="60"/>
    </location>
</feature>
<feature type="disulfide bond" evidence="1">
    <location>
        <begin position="109"/>
        <end position="114"/>
    </location>
</feature>
<feature type="disulfide bond" evidence="1">
    <location>
        <begin position="272"/>
        <end position="276"/>
    </location>
</feature>
<feature type="disulfide bond" evidence="1">
    <location>
        <begin position="314"/>
        <end position="351"/>
    </location>
</feature>
<evidence type="ECO:0000250" key="1"/>
<evidence type="ECO:0000255" key="2"/>
<evidence type="ECO:0000255" key="3">
    <source>
        <dbReference type="PROSITE-ProRule" id="PRU01103"/>
    </source>
</evidence>
<evidence type="ECO:0000255" key="4">
    <source>
        <dbReference type="PROSITE-ProRule" id="PRU10094"/>
    </source>
</evidence>
<evidence type="ECO:0000305" key="5"/>
<keyword id="KW-0064">Aspartyl protease</keyword>
<keyword id="KW-0068">Autocatalytic cleavage</keyword>
<keyword id="KW-1015">Disulfide bond</keyword>
<keyword id="KW-0967">Endosome</keyword>
<keyword id="KW-0325">Glycoprotein</keyword>
<keyword id="KW-0378">Hydrolase</keyword>
<keyword id="KW-0645">Protease</keyword>
<keyword id="KW-1185">Reference proteome</keyword>
<keyword id="KW-0732">Signal</keyword>
<keyword id="KW-0865">Zymogen</keyword>
<gene>
    <name type="primary">CTSE</name>
</gene>
<sequence>MKTLPLLLLLLLDLGQAQGTLDRVPLRRQPSLRKKLRAQGQLSEFWKAHKVDMVQYTETCTMEQSANEPLINYLDMEYFGTISIGSPPQNFTVIFDTVSSNLWVPSVYCTSPACQMHPQFRPSQSNTYSEVGTPFSIAYGTGSLTGIIGADQVSVQGLTVVGQQFGESVKEPGQTFVNAEFDGILGLGYPSLAAGGVTPVFDNMMAQNLVSLPMFSVYMSSNPEGGSGSELTFGGYDSSHFSGSLNWVPVTKQGYWQIALDEIQVGGSPMFCPEGCQAIVDTGTSLITGPSDKIIQLQAAIGATPMDGEYAVECENLNIMPDVTFVINGVPYTLSATAYTLPDFVDGMQFCGSGFQGLDIQPPAGPLWILGDVFIRQFYSVFDRGSNRVGLAPAVP</sequence>
<reference key="1">
    <citation type="journal article" date="1993" name="Eur. J. Biochem.">
        <title>Rabbit procathepsin E and cathepsin E. Nucleotide sequence of cDNA, hydrolytic specificity for biologically active peptides and gene expression during development.</title>
        <authorList>
            <person name="Kageyama T."/>
        </authorList>
    </citation>
    <scope>NUCLEOTIDE SEQUENCE [MRNA]</scope>
    <source>
        <strain>Japanese white</strain>
    </source>
</reference>
<name>CATE_RABIT</name>